<sequence length="437" mass="49408">MSEEQDPLLAGLGETSGDNHTQQSHEQQPEQPQETEEHHEEEPSRVDPEQEAHNKALNQFKRKLLEHRRYDDQLKQRRQNIRDLEKLYDKTENDIKALQSIGQLIGEVMKELSEEKYIVKASSGPRYIVGVRNSVDRSKLKKGVRVTLDITTLTIMRILPRETDPLVYNMTSFEQGEITFDGIGGLTEQIRELREVIELPLKNPEIFQRVGIKPPKGVLLYGPPGTGKTLLAKAVAATIGANFIFSPASGIVDKYIGESARIIREMFAYAKEHEPCIIFMDEVDAIGGRRFSEGTSADREIQRTLMELLTQMDGFDNLGQTKIIMATNRPDTLDPALLRPGRLDRKVEIPLPNEAGRLEIFKIHTAKVKKTGEFDFEAAVKMSDGFNGADIRNCATEAGFFAIRDDRDHINPDDLMKAVRKVAEVKKLEGTIEYQKL</sequence>
<comment type="function">
    <text evidence="1">The 26S proteasome is involved in the ATP-dependent degradation of ubiquitinated proteins. The regulatory (or ATPase) complex confers ATP dependency and substrate specificity to the 26S complex (By similarity).</text>
</comment>
<comment type="interaction">
    <interactant intactId="EBI-18520">
        <id>P53549</id>
    </interactant>
    <interactant intactId="EBI-11219">
        <id>P43588</id>
        <label>RPN11</label>
    </interactant>
    <organismsDiffer>false</organismsDiffer>
    <experiments>4</experiments>
</comment>
<comment type="interaction">
    <interactant intactId="EBI-18520">
        <id>P53549</id>
    </interactant>
    <interactant intactId="EBI-13910">
        <id>P33299</id>
        <label>RPT1</label>
    </interactant>
    <organismsDiffer>false</organismsDiffer>
    <experiments>7</experiments>
</comment>
<comment type="interaction">
    <interactant intactId="EBI-18520">
        <id>P53549</id>
    </interactant>
    <interactant intactId="EBI-13905">
        <id>P33298</id>
        <label>RPT3</label>
    </interactant>
    <organismsDiffer>false</organismsDiffer>
    <experiments>6</experiments>
</comment>
<comment type="interaction">
    <interactant intactId="EBI-18520">
        <id>P53549</id>
    </interactant>
    <interactant intactId="EBI-13920">
        <id>P33297</id>
        <label>RPT5</label>
    </interactant>
    <organismsDiffer>false</organismsDiffer>
    <experiments>11</experiments>
</comment>
<comment type="interaction">
    <interactant intactId="EBI-18520">
        <id>P53549</id>
    </interactant>
    <interactant intactId="EBI-13914">
        <id>Q01939</id>
        <label>RPT6</label>
    </interactant>
    <organismsDiffer>false</organismsDiffer>
    <experiments>4</experiments>
</comment>
<comment type="PTM">
    <text evidence="4">N-acetylated by NAT1.</text>
</comment>
<comment type="similarity">
    <text evidence="5">Belongs to the AAA ATPase family.</text>
</comment>
<evidence type="ECO:0000250" key="1"/>
<evidence type="ECO:0000255" key="2"/>
<evidence type="ECO:0000256" key="3">
    <source>
        <dbReference type="SAM" id="MobiDB-lite"/>
    </source>
</evidence>
<evidence type="ECO:0000269" key="4">
    <source>
    </source>
</evidence>
<evidence type="ECO:0000305" key="5"/>
<organism>
    <name type="scientific">Saccharomyces cerevisiae (strain ATCC 204508 / S288c)</name>
    <name type="common">Baker's yeast</name>
    <dbReference type="NCBI Taxonomy" id="559292"/>
    <lineage>
        <taxon>Eukaryota</taxon>
        <taxon>Fungi</taxon>
        <taxon>Dikarya</taxon>
        <taxon>Ascomycota</taxon>
        <taxon>Saccharomycotina</taxon>
        <taxon>Saccharomycetes</taxon>
        <taxon>Saccharomycetales</taxon>
        <taxon>Saccharomycetaceae</taxon>
        <taxon>Saccharomyces</taxon>
    </lineage>
</organism>
<accession>P53549</accession>
<accession>D6W2W0</accession>
<accession>Q08718</accession>
<name>PRS10_YEAST</name>
<proteinExistence type="evidence at protein level"/>
<gene>
    <name type="primary">RPT4</name>
    <name type="synonym">CRL13</name>
    <name type="synonym">PCS1</name>
    <name type="synonym">SUG2</name>
    <name type="ordered locus">YOR259C</name>
</gene>
<dbReference type="EMBL" id="U43720">
    <property type="protein sequence ID" value="AAA85134.1"/>
    <property type="molecule type" value="Genomic_DNA"/>
</dbReference>
<dbReference type="EMBL" id="U93262">
    <property type="protein sequence ID" value="AAB51594.1"/>
    <property type="molecule type" value="Genomic_DNA"/>
</dbReference>
<dbReference type="EMBL" id="Z75167">
    <property type="protein sequence ID" value="CAA99481.1"/>
    <property type="molecule type" value="Genomic_DNA"/>
</dbReference>
<dbReference type="EMBL" id="BK006948">
    <property type="protein sequence ID" value="DAA11026.1"/>
    <property type="molecule type" value="Genomic_DNA"/>
</dbReference>
<dbReference type="PIR" id="S67156">
    <property type="entry name" value="S67156"/>
</dbReference>
<dbReference type="RefSeq" id="NP_014902.3">
    <property type="nucleotide sequence ID" value="NM_001183678.3"/>
</dbReference>
<dbReference type="PDB" id="3JCO">
    <property type="method" value="EM"/>
    <property type="resolution" value="4.80 A"/>
    <property type="chains" value="L=1-437"/>
</dbReference>
<dbReference type="PDB" id="3JCP">
    <property type="method" value="EM"/>
    <property type="resolution" value="4.60 A"/>
    <property type="chains" value="L=1-437"/>
</dbReference>
<dbReference type="PDB" id="4CR2">
    <property type="method" value="EM"/>
    <property type="resolution" value="7.70 A"/>
    <property type="chains" value="L=1-437"/>
</dbReference>
<dbReference type="PDB" id="4CR3">
    <property type="method" value="EM"/>
    <property type="resolution" value="9.30 A"/>
    <property type="chains" value="L=1-437"/>
</dbReference>
<dbReference type="PDB" id="4CR4">
    <property type="method" value="EM"/>
    <property type="resolution" value="8.80 A"/>
    <property type="chains" value="L=1-437"/>
</dbReference>
<dbReference type="PDB" id="5A5B">
    <property type="method" value="EM"/>
    <property type="resolution" value="9.50 A"/>
    <property type="chains" value="L=1-437"/>
</dbReference>
<dbReference type="PDB" id="5MP9">
    <property type="method" value="EM"/>
    <property type="resolution" value="4.10 A"/>
    <property type="chains" value="L=1-437"/>
</dbReference>
<dbReference type="PDB" id="5MPA">
    <property type="method" value="EM"/>
    <property type="resolution" value="4.50 A"/>
    <property type="chains" value="L=1-437"/>
</dbReference>
<dbReference type="PDB" id="5MPB">
    <property type="method" value="EM"/>
    <property type="resolution" value="7.80 A"/>
    <property type="chains" value="L=1-437"/>
</dbReference>
<dbReference type="PDB" id="5MPC">
    <property type="method" value="EM"/>
    <property type="resolution" value="7.70 A"/>
    <property type="chains" value="L=1-437"/>
</dbReference>
<dbReference type="PDB" id="5WVI">
    <property type="method" value="EM"/>
    <property type="resolution" value="6.30 A"/>
    <property type="chains" value="L=1-437"/>
</dbReference>
<dbReference type="PDB" id="5WVK">
    <property type="method" value="EM"/>
    <property type="resolution" value="4.20 A"/>
    <property type="chains" value="L=1-437"/>
</dbReference>
<dbReference type="PDB" id="6EF0">
    <property type="method" value="EM"/>
    <property type="resolution" value="4.43 A"/>
    <property type="chains" value="L=164-436"/>
</dbReference>
<dbReference type="PDB" id="6EF1">
    <property type="method" value="EM"/>
    <property type="resolution" value="4.73 A"/>
    <property type="chains" value="L=166-436"/>
</dbReference>
<dbReference type="PDB" id="6EF2">
    <property type="method" value="EM"/>
    <property type="resolution" value="4.27 A"/>
    <property type="chains" value="L=166-429"/>
</dbReference>
<dbReference type="PDB" id="6EF3">
    <property type="method" value="EM"/>
    <property type="resolution" value="4.17 A"/>
    <property type="chains" value="L=1-437"/>
</dbReference>
<dbReference type="PDB" id="6FVT">
    <property type="method" value="EM"/>
    <property type="resolution" value="4.10 A"/>
    <property type="chains" value="L=49-436"/>
</dbReference>
<dbReference type="PDB" id="6FVU">
    <property type="method" value="EM"/>
    <property type="resolution" value="4.50 A"/>
    <property type="chains" value="L=49-436"/>
</dbReference>
<dbReference type="PDB" id="6FVV">
    <property type="method" value="EM"/>
    <property type="resolution" value="5.40 A"/>
    <property type="chains" value="L=49-436"/>
</dbReference>
<dbReference type="PDB" id="6FVW">
    <property type="method" value="EM"/>
    <property type="resolution" value="4.50 A"/>
    <property type="chains" value="L=49-436"/>
</dbReference>
<dbReference type="PDB" id="6FVX">
    <property type="method" value="EM"/>
    <property type="resolution" value="4.90 A"/>
    <property type="chains" value="L=49-436"/>
</dbReference>
<dbReference type="PDB" id="6FVY">
    <property type="method" value="EM"/>
    <property type="resolution" value="6.10 A"/>
    <property type="chains" value="L=49-436"/>
</dbReference>
<dbReference type="PDB" id="6J2C">
    <property type="method" value="EM"/>
    <property type="resolution" value="7.00 A"/>
    <property type="chains" value="L=1-437"/>
</dbReference>
<dbReference type="PDB" id="6J2N">
    <property type="method" value="EM"/>
    <property type="resolution" value="7.50 A"/>
    <property type="chains" value="L=1-437"/>
</dbReference>
<dbReference type="PDB" id="6J2Q">
    <property type="method" value="EM"/>
    <property type="resolution" value="3.80 A"/>
    <property type="chains" value="L=1-437"/>
</dbReference>
<dbReference type="PDB" id="6J2X">
    <property type="method" value="EM"/>
    <property type="resolution" value="3.80 A"/>
    <property type="chains" value="L=1-437"/>
</dbReference>
<dbReference type="PDB" id="6J30">
    <property type="method" value="EM"/>
    <property type="resolution" value="4.50 A"/>
    <property type="chains" value="L=1-437"/>
</dbReference>
<dbReference type="PDB" id="7QO4">
    <property type="method" value="EM"/>
    <property type="resolution" value="7.00 A"/>
    <property type="chains" value="L=1-437"/>
</dbReference>
<dbReference type="PDB" id="7QO5">
    <property type="method" value="EM"/>
    <property type="resolution" value="6.00 A"/>
    <property type="chains" value="L=1-437"/>
</dbReference>
<dbReference type="PDBsum" id="3JCO"/>
<dbReference type="PDBsum" id="3JCP"/>
<dbReference type="PDBsum" id="4CR2"/>
<dbReference type="PDBsum" id="4CR3"/>
<dbReference type="PDBsum" id="4CR4"/>
<dbReference type="PDBsum" id="5A5B"/>
<dbReference type="PDBsum" id="5MP9"/>
<dbReference type="PDBsum" id="5MPA"/>
<dbReference type="PDBsum" id="5MPB"/>
<dbReference type="PDBsum" id="5MPC"/>
<dbReference type="PDBsum" id="5WVI"/>
<dbReference type="PDBsum" id="5WVK"/>
<dbReference type="PDBsum" id="6EF0"/>
<dbReference type="PDBsum" id="6EF1"/>
<dbReference type="PDBsum" id="6EF2"/>
<dbReference type="PDBsum" id="6EF3"/>
<dbReference type="PDBsum" id="6FVT"/>
<dbReference type="PDBsum" id="6FVU"/>
<dbReference type="PDBsum" id="6FVV"/>
<dbReference type="PDBsum" id="6FVW"/>
<dbReference type="PDBsum" id="6FVX"/>
<dbReference type="PDBsum" id="6FVY"/>
<dbReference type="PDBsum" id="6J2C"/>
<dbReference type="PDBsum" id="6J2N"/>
<dbReference type="PDBsum" id="6J2Q"/>
<dbReference type="PDBsum" id="6J2X"/>
<dbReference type="PDBsum" id="6J30"/>
<dbReference type="PDBsum" id="7QO4"/>
<dbReference type="PDBsum" id="7QO5"/>
<dbReference type="EMDB" id="EMD-14084"/>
<dbReference type="EMDB" id="EMD-3534"/>
<dbReference type="EMDB" id="EMD-3535"/>
<dbReference type="EMDB" id="EMD-3536"/>
<dbReference type="EMDB" id="EMD-3537"/>
<dbReference type="EMDB" id="EMD-4321"/>
<dbReference type="EMDB" id="EMD-4322"/>
<dbReference type="EMDB" id="EMD-4323"/>
<dbReference type="EMDB" id="EMD-4324"/>
<dbReference type="EMDB" id="EMD-6693"/>
<dbReference type="EMDB" id="EMD-6694"/>
<dbReference type="EMDB" id="EMD-9042"/>
<dbReference type="EMDB" id="EMD-9043"/>
<dbReference type="EMDB" id="EMD-9044"/>
<dbReference type="EMDB" id="EMD-9045"/>
<dbReference type="EMDB" id="EMD-9769"/>
<dbReference type="EMDB" id="EMD-9770"/>
<dbReference type="EMDB" id="EMD-9771"/>
<dbReference type="EMDB" id="EMD-9772"/>
<dbReference type="EMDB" id="EMD-9773"/>
<dbReference type="SMR" id="P53549"/>
<dbReference type="BioGRID" id="34649">
    <property type="interactions" value="860"/>
</dbReference>
<dbReference type="ComplexPortal" id="CPX-2262">
    <property type="entry name" value="26S proteasome complex"/>
</dbReference>
<dbReference type="DIP" id="DIP-1589N"/>
<dbReference type="FunCoup" id="P53549">
    <property type="interactions" value="1425"/>
</dbReference>
<dbReference type="IntAct" id="P53549">
    <property type="interactions" value="61"/>
</dbReference>
<dbReference type="MINT" id="P53549"/>
<dbReference type="STRING" id="4932.YOR259C"/>
<dbReference type="iPTMnet" id="P53549"/>
<dbReference type="PaxDb" id="4932-YOR259C"/>
<dbReference type="PeptideAtlas" id="P53549"/>
<dbReference type="EnsemblFungi" id="YOR259C_mRNA">
    <property type="protein sequence ID" value="YOR259C"/>
    <property type="gene ID" value="YOR259C"/>
</dbReference>
<dbReference type="GeneID" id="854433"/>
<dbReference type="KEGG" id="sce:YOR259C"/>
<dbReference type="AGR" id="SGD:S000005785"/>
<dbReference type="SGD" id="S000005785">
    <property type="gene designation" value="RPT4"/>
</dbReference>
<dbReference type="VEuPathDB" id="FungiDB:YOR259C"/>
<dbReference type="eggNOG" id="KOG0651">
    <property type="taxonomic scope" value="Eukaryota"/>
</dbReference>
<dbReference type="GeneTree" id="ENSGT01020000230346"/>
<dbReference type="HOGENOM" id="CLU_000688_2_2_1"/>
<dbReference type="InParanoid" id="P53549"/>
<dbReference type="OMA" id="DHEPCVI"/>
<dbReference type="OrthoDB" id="1664597at2759"/>
<dbReference type="BioCyc" id="YEAST:G3O-33750-MONOMER"/>
<dbReference type="BRENDA" id="5.6.1.5">
    <property type="organism ID" value="984"/>
</dbReference>
<dbReference type="Reactome" id="R-SCE-1236978">
    <property type="pathway name" value="Cross-presentation of soluble exogenous antigens (endosomes)"/>
</dbReference>
<dbReference type="Reactome" id="R-SCE-5668541">
    <property type="pathway name" value="TNFR2 non-canonical NF-kB pathway"/>
</dbReference>
<dbReference type="Reactome" id="R-SCE-5687128">
    <property type="pathway name" value="MAPK6/MAPK4 signaling"/>
</dbReference>
<dbReference type="Reactome" id="R-SCE-5689880">
    <property type="pathway name" value="Ub-specific processing proteases"/>
</dbReference>
<dbReference type="Reactome" id="R-SCE-68949">
    <property type="pathway name" value="Orc1 removal from chromatin"/>
</dbReference>
<dbReference type="Reactome" id="R-SCE-69017">
    <property type="pathway name" value="CDK-mediated phosphorylation and removal of Cdc6"/>
</dbReference>
<dbReference type="Reactome" id="R-SCE-69601">
    <property type="pathway name" value="Ubiquitin Mediated Degradation of Phosphorylated Cdc25A"/>
</dbReference>
<dbReference type="Reactome" id="R-SCE-8854050">
    <property type="pathway name" value="FBXL7 down-regulates AURKA during mitotic entry and in early mitosis"/>
</dbReference>
<dbReference type="Reactome" id="R-SCE-8948751">
    <property type="pathway name" value="Regulation of PTEN stability and activity"/>
</dbReference>
<dbReference type="Reactome" id="R-SCE-8951664">
    <property type="pathway name" value="Neddylation"/>
</dbReference>
<dbReference type="Reactome" id="R-SCE-9755511">
    <property type="pathway name" value="KEAP1-NFE2L2 pathway"/>
</dbReference>
<dbReference type="Reactome" id="R-SCE-983168">
    <property type="pathway name" value="Antigen processing: Ubiquitination &amp; Proteasome degradation"/>
</dbReference>
<dbReference type="Reactome" id="R-SCE-9907900">
    <property type="pathway name" value="Proteasome assembly"/>
</dbReference>
<dbReference type="BioGRID-ORCS" id="854433">
    <property type="hits" value="0 hits in 10 CRISPR screens"/>
</dbReference>
<dbReference type="EvolutionaryTrace" id="P53549"/>
<dbReference type="PRO" id="PR:P53549"/>
<dbReference type="Proteomes" id="UP000002311">
    <property type="component" value="Chromosome XV"/>
</dbReference>
<dbReference type="RNAct" id="P53549">
    <property type="molecule type" value="protein"/>
</dbReference>
<dbReference type="GO" id="GO:0005634">
    <property type="term" value="C:nucleus"/>
    <property type="evidence" value="ECO:0000314"/>
    <property type="project" value="SGD"/>
</dbReference>
<dbReference type="GO" id="GO:0000502">
    <property type="term" value="C:proteasome complex"/>
    <property type="evidence" value="ECO:0000353"/>
    <property type="project" value="ComplexPortal"/>
</dbReference>
<dbReference type="GO" id="GO:0008540">
    <property type="term" value="C:proteasome regulatory particle, base subcomplex"/>
    <property type="evidence" value="ECO:0000314"/>
    <property type="project" value="SGD"/>
</dbReference>
<dbReference type="GO" id="GO:0005524">
    <property type="term" value="F:ATP binding"/>
    <property type="evidence" value="ECO:0007669"/>
    <property type="project" value="UniProtKB-KW"/>
</dbReference>
<dbReference type="GO" id="GO:0016887">
    <property type="term" value="F:ATP hydrolysis activity"/>
    <property type="evidence" value="ECO:0000250"/>
    <property type="project" value="SGD"/>
</dbReference>
<dbReference type="GO" id="GO:0036402">
    <property type="term" value="F:proteasome-activating activity"/>
    <property type="evidence" value="ECO:0000318"/>
    <property type="project" value="GO_Central"/>
</dbReference>
<dbReference type="GO" id="GO:0019904">
    <property type="term" value="F:protein domain specific binding"/>
    <property type="evidence" value="ECO:0000314"/>
    <property type="project" value="SGD"/>
</dbReference>
<dbReference type="GO" id="GO:0031625">
    <property type="term" value="F:ubiquitin protein ligase binding"/>
    <property type="evidence" value="ECO:0000353"/>
    <property type="project" value="SGD"/>
</dbReference>
<dbReference type="GO" id="GO:0036503">
    <property type="term" value="P:ERAD pathway"/>
    <property type="evidence" value="ECO:0000315"/>
    <property type="project" value="SGD"/>
</dbReference>
<dbReference type="GO" id="GO:0006289">
    <property type="term" value="P:nucleotide-excision repair"/>
    <property type="evidence" value="ECO:0000316"/>
    <property type="project" value="SGD"/>
</dbReference>
<dbReference type="GO" id="GO:0045899">
    <property type="term" value="P:positive regulation of RNA polymerase II transcription preinitiation complex assembly"/>
    <property type="evidence" value="ECO:0000315"/>
    <property type="project" value="SGD"/>
</dbReference>
<dbReference type="GO" id="GO:0032968">
    <property type="term" value="P:positive regulation of transcription elongation by RNA polymerase II"/>
    <property type="evidence" value="ECO:0000315"/>
    <property type="project" value="SGD"/>
</dbReference>
<dbReference type="GO" id="GO:0070682">
    <property type="term" value="P:proteasome regulatory particle assembly"/>
    <property type="evidence" value="ECO:0000315"/>
    <property type="project" value="SGD"/>
</dbReference>
<dbReference type="GO" id="GO:0043161">
    <property type="term" value="P:proteasome-mediated ubiquitin-dependent protein catabolic process"/>
    <property type="evidence" value="ECO:0000314"/>
    <property type="project" value="ComplexPortal"/>
</dbReference>
<dbReference type="FunFam" id="2.40.50.140:FF:000168">
    <property type="entry name" value="26S protease regulatory subunit 10B"/>
    <property type="match status" value="1"/>
</dbReference>
<dbReference type="FunFam" id="3.40.50.300:FF:000034">
    <property type="entry name" value="26S protease regulatory subunit 10B"/>
    <property type="match status" value="1"/>
</dbReference>
<dbReference type="Gene3D" id="1.10.8.60">
    <property type="match status" value="1"/>
</dbReference>
<dbReference type="Gene3D" id="2.40.50.140">
    <property type="entry name" value="Nucleic acid-binding proteins"/>
    <property type="match status" value="1"/>
</dbReference>
<dbReference type="Gene3D" id="3.40.50.300">
    <property type="entry name" value="P-loop containing nucleotide triphosphate hydrolases"/>
    <property type="match status" value="1"/>
</dbReference>
<dbReference type="InterPro" id="IPR050221">
    <property type="entry name" value="26S_Proteasome_ATPase"/>
</dbReference>
<dbReference type="InterPro" id="IPR003593">
    <property type="entry name" value="AAA+_ATPase"/>
</dbReference>
<dbReference type="InterPro" id="IPR041569">
    <property type="entry name" value="AAA_lid_3"/>
</dbReference>
<dbReference type="InterPro" id="IPR003959">
    <property type="entry name" value="ATPase_AAA_core"/>
</dbReference>
<dbReference type="InterPro" id="IPR003960">
    <property type="entry name" value="ATPase_AAA_CS"/>
</dbReference>
<dbReference type="InterPro" id="IPR012340">
    <property type="entry name" value="NA-bd_OB-fold"/>
</dbReference>
<dbReference type="InterPro" id="IPR027417">
    <property type="entry name" value="P-loop_NTPase"/>
</dbReference>
<dbReference type="InterPro" id="IPR032501">
    <property type="entry name" value="Prot_ATP_ID_OB_2nd"/>
</dbReference>
<dbReference type="PANTHER" id="PTHR23073">
    <property type="entry name" value="26S PROTEASOME REGULATORY SUBUNIT"/>
    <property type="match status" value="1"/>
</dbReference>
<dbReference type="Pfam" id="PF00004">
    <property type="entry name" value="AAA"/>
    <property type="match status" value="1"/>
</dbReference>
<dbReference type="Pfam" id="PF17862">
    <property type="entry name" value="AAA_lid_3"/>
    <property type="match status" value="1"/>
</dbReference>
<dbReference type="Pfam" id="PF16450">
    <property type="entry name" value="Prot_ATP_ID_OB_C"/>
    <property type="match status" value="1"/>
</dbReference>
<dbReference type="SMART" id="SM00382">
    <property type="entry name" value="AAA"/>
    <property type="match status" value="1"/>
</dbReference>
<dbReference type="SUPFAM" id="SSF52540">
    <property type="entry name" value="P-loop containing nucleoside triphosphate hydrolases"/>
    <property type="match status" value="1"/>
</dbReference>
<dbReference type="PROSITE" id="PS00674">
    <property type="entry name" value="AAA"/>
    <property type="match status" value="1"/>
</dbReference>
<reference key="1">
    <citation type="journal article" date="1996" name="J. Biol. Chem.">
        <title>Isolation and characterization of SUG2. A novel ATPase family component of the yeast 26 S proteasome.</title>
        <authorList>
            <person name="Russell S.J."/>
            <person name="Sathyanarayana U.G."/>
            <person name="Johnston S.A."/>
        </authorList>
    </citation>
    <scope>NUCLEOTIDE SEQUENCE [GENOMIC DNA]</scope>
</reference>
<reference key="2">
    <citation type="journal article" date="1997" name="J. Cell Biol.">
        <title>A proteasome cap subunit required for spindle pole body duplication in yeast.</title>
        <authorList>
            <person name="McDonald H.B."/>
            <person name="Byers B."/>
        </authorList>
    </citation>
    <scope>NUCLEOTIDE SEQUENCE [GENOMIC DNA]</scope>
</reference>
<reference key="3">
    <citation type="journal article" date="1997" name="Yeast">
        <title>Sequencing analysis of a 36.8 kb fragment of yeast chromosome XV reveals 26 open reading frames including SEC63, CDC31, SUG2, GCD1, RBL2, PNT1, PAC1 and VPH1.</title>
        <authorList>
            <person name="Poirey R."/>
            <person name="Jauniaux J.-C."/>
        </authorList>
    </citation>
    <scope>NUCLEOTIDE SEQUENCE [GENOMIC DNA]</scope>
    <source>
        <strain>ATCC 96604 / S288c / FY1679</strain>
    </source>
</reference>
<reference key="4">
    <citation type="journal article" date="1997" name="Nature">
        <title>The nucleotide sequence of Saccharomyces cerevisiae chromosome XV.</title>
        <authorList>
            <person name="Dujon B."/>
            <person name="Albermann K."/>
            <person name="Aldea M."/>
            <person name="Alexandraki D."/>
            <person name="Ansorge W."/>
            <person name="Arino J."/>
            <person name="Benes V."/>
            <person name="Bohn C."/>
            <person name="Bolotin-Fukuhara M."/>
            <person name="Bordonne R."/>
            <person name="Boyer J."/>
            <person name="Camasses A."/>
            <person name="Casamayor A."/>
            <person name="Casas C."/>
            <person name="Cheret G."/>
            <person name="Cziepluch C."/>
            <person name="Daignan-Fornier B."/>
            <person name="Dang V.-D."/>
            <person name="de Haan M."/>
            <person name="Delius H."/>
            <person name="Durand P."/>
            <person name="Fairhead C."/>
            <person name="Feldmann H."/>
            <person name="Gaillon L."/>
            <person name="Galisson F."/>
            <person name="Gamo F.-J."/>
            <person name="Gancedo C."/>
            <person name="Goffeau A."/>
            <person name="Goulding S.E."/>
            <person name="Grivell L.A."/>
            <person name="Habbig B."/>
            <person name="Hand N.J."/>
            <person name="Hani J."/>
            <person name="Hattenhorst U."/>
            <person name="Hebling U."/>
            <person name="Hernando Y."/>
            <person name="Herrero E."/>
            <person name="Heumann K."/>
            <person name="Hiesel R."/>
            <person name="Hilger F."/>
            <person name="Hofmann B."/>
            <person name="Hollenberg C.P."/>
            <person name="Hughes B."/>
            <person name="Jauniaux J.-C."/>
            <person name="Kalogeropoulos A."/>
            <person name="Katsoulou C."/>
            <person name="Kordes E."/>
            <person name="Lafuente M.J."/>
            <person name="Landt O."/>
            <person name="Louis E.J."/>
            <person name="Maarse A.C."/>
            <person name="Madania A."/>
            <person name="Mannhaupt G."/>
            <person name="Marck C."/>
            <person name="Martin R.P."/>
            <person name="Mewes H.-W."/>
            <person name="Michaux G."/>
            <person name="Paces V."/>
            <person name="Parle-McDermott A.G."/>
            <person name="Pearson B.M."/>
            <person name="Perrin A."/>
            <person name="Pettersson B."/>
            <person name="Poch O."/>
            <person name="Pohl T.M."/>
            <person name="Poirey R."/>
            <person name="Portetelle D."/>
            <person name="Pujol A."/>
            <person name="Purnelle B."/>
            <person name="Ramezani Rad M."/>
            <person name="Rechmann S."/>
            <person name="Schwager C."/>
            <person name="Schweizer M."/>
            <person name="Sor F."/>
            <person name="Sterky F."/>
            <person name="Tarassov I.A."/>
            <person name="Teodoru C."/>
            <person name="Tettelin H."/>
            <person name="Thierry A."/>
            <person name="Tobiasch E."/>
            <person name="Tzermia M."/>
            <person name="Uhlen M."/>
            <person name="Unseld M."/>
            <person name="Valens M."/>
            <person name="Vandenbol M."/>
            <person name="Vetter I."/>
            <person name="Vlcek C."/>
            <person name="Voet M."/>
            <person name="Volckaert G."/>
            <person name="Voss H."/>
            <person name="Wambutt R."/>
            <person name="Wedler H."/>
            <person name="Wiemann S."/>
            <person name="Winsor B."/>
            <person name="Wolfe K.H."/>
            <person name="Zollner A."/>
            <person name="Zumstein E."/>
            <person name="Kleine K."/>
        </authorList>
    </citation>
    <scope>NUCLEOTIDE SEQUENCE [LARGE SCALE GENOMIC DNA]</scope>
    <source>
        <strain>ATCC 204508 / S288c</strain>
    </source>
</reference>
<reference key="5">
    <citation type="journal article" date="2014" name="G3 (Bethesda)">
        <title>The reference genome sequence of Saccharomyces cerevisiae: Then and now.</title>
        <authorList>
            <person name="Engel S.R."/>
            <person name="Dietrich F.S."/>
            <person name="Fisk D.G."/>
            <person name="Binkley G."/>
            <person name="Balakrishnan R."/>
            <person name="Costanzo M.C."/>
            <person name="Dwight S.S."/>
            <person name="Hitz B.C."/>
            <person name="Karra K."/>
            <person name="Nash R.S."/>
            <person name="Weng S."/>
            <person name="Wong E.D."/>
            <person name="Lloyd P."/>
            <person name="Skrzypek M.S."/>
            <person name="Miyasato S.R."/>
            <person name="Simison M."/>
            <person name="Cherry J.M."/>
        </authorList>
    </citation>
    <scope>GENOME REANNOTATION</scope>
    <source>
        <strain>ATCC 204508 / S288c</strain>
    </source>
</reference>
<reference key="6">
    <citation type="journal article" date="2003" name="Arch. Biochem. Biophys.">
        <title>N-terminal modifications of the 19S regulatory particle subunits of the yeast proteasome.</title>
        <authorList>
            <person name="Kimura Y."/>
            <person name="Saeki Y."/>
            <person name="Yokosawa H."/>
            <person name="Polevoda B."/>
            <person name="Sherman F."/>
            <person name="Hirano H."/>
        </authorList>
    </citation>
    <scope>PROTEIN SEQUENCE OF 2-10</scope>
    <scope>ACETYLATION AT SER-2</scope>
</reference>
<reference key="7">
    <citation type="journal article" date="2012" name="Proc. Natl. Acad. Sci. U.S.A.">
        <title>Near-atomic resolution structural model of the yeast 26S proteasome.</title>
        <authorList>
            <person name="Beck F."/>
            <person name="Unverdorben P."/>
            <person name="Bohn S."/>
            <person name="Schweitzer A."/>
            <person name="Pfeifer G."/>
            <person name="Sakata E."/>
            <person name="Nickell S."/>
            <person name="Plitzko J.M."/>
            <person name="Villa E."/>
            <person name="Baumeister W."/>
            <person name="Forster F."/>
        </authorList>
    </citation>
    <scope>STRUCTURE BY ELECTRON MICROSCOPY (7.4 ANGSTROMS) OF THE 26S PROTEASOME</scope>
</reference>
<feature type="initiator methionine" description="Removed" evidence="4">
    <location>
        <position position="1"/>
    </location>
</feature>
<feature type="chain" id="PRO_0000084737" description="26S proteasome subunit RPT4">
    <location>
        <begin position="2"/>
        <end position="437"/>
    </location>
</feature>
<feature type="region of interest" description="Disordered" evidence="3">
    <location>
        <begin position="1"/>
        <end position="51"/>
    </location>
</feature>
<feature type="compositionally biased region" description="Low complexity" evidence="3">
    <location>
        <begin position="20"/>
        <end position="32"/>
    </location>
</feature>
<feature type="compositionally biased region" description="Basic and acidic residues" evidence="3">
    <location>
        <begin position="35"/>
        <end position="51"/>
    </location>
</feature>
<feature type="binding site" evidence="2">
    <location>
        <begin position="222"/>
        <end position="229"/>
    </location>
    <ligand>
        <name>ATP</name>
        <dbReference type="ChEBI" id="CHEBI:30616"/>
    </ligand>
</feature>
<feature type="modified residue" description="N-acetylserine" evidence="4">
    <location>
        <position position="2"/>
    </location>
</feature>
<feature type="sequence conflict" description="In Ref. 1; AAA85134." evidence="5" ref="1">
    <original>A</original>
    <variation>P</variation>
    <location>
        <position position="121"/>
    </location>
</feature>
<feature type="sequence conflict" description="In Ref. 1; AAA85134." evidence="5" ref="1">
    <original>V</original>
    <variation>A</variation>
    <location>
        <position position="135"/>
    </location>
</feature>
<keyword id="KW-0002">3D-structure</keyword>
<keyword id="KW-0007">Acetylation</keyword>
<keyword id="KW-0067">ATP-binding</keyword>
<keyword id="KW-0903">Direct protein sequencing</keyword>
<keyword id="KW-0547">Nucleotide-binding</keyword>
<keyword id="KW-0647">Proteasome</keyword>
<keyword id="KW-1185">Reference proteome</keyword>
<protein>
    <recommendedName>
        <fullName>26S proteasome subunit RPT4</fullName>
    </recommendedName>
    <alternativeName>
        <fullName>26S protease subunit SUG2</fullName>
    </alternativeName>
    <alternativeName>
        <fullName>Proteasomal cap subunit</fullName>
    </alternativeName>
</protein>